<evidence type="ECO:0000250" key="1">
    <source>
        <dbReference type="UniProtKB" id="Q42522"/>
    </source>
</evidence>
<evidence type="ECO:0000255" key="2"/>
<evidence type="ECO:0000269" key="3">
    <source>
    </source>
</evidence>
<evidence type="ECO:0000269" key="4">
    <source>
    </source>
</evidence>
<evidence type="ECO:0000269" key="5">
    <source>
    </source>
</evidence>
<evidence type="ECO:0000303" key="6">
    <source>
    </source>
</evidence>
<evidence type="ECO:0000303" key="7">
    <source>
    </source>
</evidence>
<evidence type="ECO:0000303" key="8">
    <source>
    </source>
</evidence>
<evidence type="ECO:0000305" key="9"/>
<evidence type="ECO:0000312" key="10">
    <source>
        <dbReference type="Araport" id="AT5G63570"/>
    </source>
</evidence>
<evidence type="ECO:0000312" key="11">
    <source>
        <dbReference type="EMBL" id="BAB10450.1"/>
    </source>
</evidence>
<evidence type="ECO:0007744" key="12">
    <source>
        <dbReference type="PDB" id="5HDM"/>
    </source>
</evidence>
<evidence type="ECO:0007829" key="13">
    <source>
        <dbReference type="PDB" id="5HDM"/>
    </source>
</evidence>
<comment type="function">
    <text evidence="5">Transaminase converting glutamate 1-semialdehyde (GSA) to 5-aminolevulinate (ALA). Involved in the biosynthesis of tetrapyrroles.</text>
</comment>
<comment type="catalytic activity">
    <reaction evidence="5">
        <text>(S)-4-amino-5-oxopentanoate = 5-aminolevulinate</text>
        <dbReference type="Rhea" id="RHEA:14265"/>
        <dbReference type="ChEBI" id="CHEBI:57501"/>
        <dbReference type="ChEBI" id="CHEBI:356416"/>
        <dbReference type="EC" id="5.4.3.8"/>
    </reaction>
</comment>
<comment type="cofactor">
    <cofactor evidence="4">
        <name>pyridoxal 5'-phosphate</name>
        <dbReference type="ChEBI" id="CHEBI:597326"/>
    </cofactor>
    <text evidence="4">Can use both pyridoxamine 5'-phosphate (PMP) and pyridoxal 5'-phosphate (PLP) as cofactors.</text>
</comment>
<comment type="biophysicochemical properties">
    <absorption>
        <max>338 nm</max>
        <text evidence="4">A relatively lower peak at 418 nm is also observed. At pH 7.5.</text>
    </absorption>
</comment>
<comment type="pathway">
    <text evidence="5">Porphyrin-containing compound metabolism; protoporphyrin-IX biosynthesis; 5-aminolevulinate from L-glutamyl-tRNA(Glu): step 2/2.</text>
</comment>
<comment type="pathway">
    <text evidence="5">Porphyrin-containing compound metabolism; chlorophyll biosynthesis.</text>
</comment>
<comment type="subunit">
    <text evidence="4">Homodimer.</text>
</comment>
<comment type="subcellular location">
    <subcellularLocation>
        <location evidence="1">Plastid</location>
        <location evidence="1">Chloroplast</location>
    </subcellularLocation>
</comment>
<comment type="tissue specificity">
    <text evidence="5">Present in all tissues tested.</text>
</comment>
<comment type="induction">
    <text evidence="5">By light. In etiolated seedlings, initial expression is reduced but after further illumination, levels steadily increase.</text>
</comment>
<comment type="disruption phenotype">
    <text evidence="3">Suppresses partially the ENF1 disruption pleiotropic developmental phenotypes.</text>
</comment>
<comment type="similarity">
    <text evidence="9">Belongs to the class-III pyridoxal-phosphate-dependent aminotransferase family. HemL subfamily.</text>
</comment>
<protein>
    <recommendedName>
        <fullName evidence="8">Glutamate-1-semialdehyde 2,1-aminomutase 1, chloroplastic</fullName>
        <shortName evidence="7">AtGSA1</shortName>
        <shortName evidence="8">GSA 1</shortName>
        <ecNumber evidence="5">5.4.3.8</ecNumber>
    </recommendedName>
    <alternativeName>
        <fullName evidence="8">Glutamate-1-semialdehyde aminotransferase 1</fullName>
        <shortName evidence="8">GSA-AT 1</shortName>
    </alternativeName>
</protein>
<name>GSA1_ARATH</name>
<proteinExistence type="evidence at protein level"/>
<dbReference type="EC" id="5.4.3.8" evidence="5"/>
<dbReference type="EMBL" id="U03773">
    <property type="protein sequence ID" value="AAA19117.1"/>
    <property type="molecule type" value="Genomic_DNA"/>
</dbReference>
<dbReference type="EMBL" id="AB005234">
    <property type="protein sequence ID" value="BAB10450.1"/>
    <property type="molecule type" value="Genomic_DNA"/>
</dbReference>
<dbReference type="EMBL" id="CP002688">
    <property type="protein sequence ID" value="AED97770.1"/>
    <property type="molecule type" value="Genomic_DNA"/>
</dbReference>
<dbReference type="EMBL" id="AY102109">
    <property type="protein sequence ID" value="AAM26679.1"/>
    <property type="molecule type" value="mRNA"/>
</dbReference>
<dbReference type="EMBL" id="AY139804">
    <property type="protein sequence ID" value="AAM98110.1"/>
    <property type="molecule type" value="mRNA"/>
</dbReference>
<dbReference type="RefSeq" id="NP_201162.1">
    <property type="nucleotide sequence ID" value="NM_125752.4"/>
</dbReference>
<dbReference type="PDB" id="5HDM">
    <property type="method" value="X-ray"/>
    <property type="resolution" value="1.25 A"/>
    <property type="chains" value="A/B=41-474"/>
</dbReference>
<dbReference type="PDBsum" id="5HDM"/>
<dbReference type="SMR" id="P42799"/>
<dbReference type="BioGRID" id="21718">
    <property type="interactions" value="17"/>
</dbReference>
<dbReference type="FunCoup" id="P42799">
    <property type="interactions" value="1178"/>
</dbReference>
<dbReference type="IntAct" id="P42799">
    <property type="interactions" value="1"/>
</dbReference>
<dbReference type="STRING" id="3702.P42799"/>
<dbReference type="GlyGen" id="P42799">
    <property type="glycosylation" value="1 site"/>
</dbReference>
<dbReference type="PaxDb" id="3702-AT5G63570.1"/>
<dbReference type="ProteomicsDB" id="222368"/>
<dbReference type="EnsemblPlants" id="AT5G63570.1">
    <property type="protein sequence ID" value="AT5G63570.1"/>
    <property type="gene ID" value="AT5G63570"/>
</dbReference>
<dbReference type="GeneID" id="836476"/>
<dbReference type="Gramene" id="AT5G63570.1">
    <property type="protein sequence ID" value="AT5G63570.1"/>
    <property type="gene ID" value="AT5G63570"/>
</dbReference>
<dbReference type="KEGG" id="ath:AT5G63570"/>
<dbReference type="Araport" id="AT5G63570"/>
<dbReference type="TAIR" id="AT5G63570">
    <property type="gene designation" value="GSA1"/>
</dbReference>
<dbReference type="eggNOG" id="KOG1401">
    <property type="taxonomic scope" value="Eukaryota"/>
</dbReference>
<dbReference type="HOGENOM" id="CLU_016922_1_5_1"/>
<dbReference type="InParanoid" id="P42799"/>
<dbReference type="PhylomeDB" id="P42799"/>
<dbReference type="BioCyc" id="ARA:AT5G63570-MONOMER"/>
<dbReference type="BioCyc" id="MetaCyc:AT5G63570-MONOMER"/>
<dbReference type="BRENDA" id="5.4.3.8">
    <property type="organism ID" value="399"/>
</dbReference>
<dbReference type="UniPathway" id="UPA00251">
    <property type="reaction ID" value="UER00317"/>
</dbReference>
<dbReference type="UniPathway" id="UPA00668"/>
<dbReference type="CD-CODE" id="4299E36E">
    <property type="entry name" value="Nucleolus"/>
</dbReference>
<dbReference type="PRO" id="PR:P42799"/>
<dbReference type="Proteomes" id="UP000006548">
    <property type="component" value="Chromosome 5"/>
</dbReference>
<dbReference type="ExpressionAtlas" id="P42799">
    <property type="expression patterns" value="baseline and differential"/>
</dbReference>
<dbReference type="GO" id="GO:0048046">
    <property type="term" value="C:apoplast"/>
    <property type="evidence" value="ECO:0007005"/>
    <property type="project" value="TAIR"/>
</dbReference>
<dbReference type="GO" id="GO:0009507">
    <property type="term" value="C:chloroplast"/>
    <property type="evidence" value="ECO:0007005"/>
    <property type="project" value="TAIR"/>
</dbReference>
<dbReference type="GO" id="GO:0009941">
    <property type="term" value="C:chloroplast envelope"/>
    <property type="evidence" value="ECO:0007005"/>
    <property type="project" value="TAIR"/>
</dbReference>
<dbReference type="GO" id="GO:0009570">
    <property type="term" value="C:chloroplast stroma"/>
    <property type="evidence" value="ECO:0007005"/>
    <property type="project" value="TAIR"/>
</dbReference>
<dbReference type="GO" id="GO:0005829">
    <property type="term" value="C:cytosol"/>
    <property type="evidence" value="ECO:0000314"/>
    <property type="project" value="TAIR"/>
</dbReference>
<dbReference type="GO" id="GO:0009536">
    <property type="term" value="C:plastid"/>
    <property type="evidence" value="ECO:0007005"/>
    <property type="project" value="TAIR"/>
</dbReference>
<dbReference type="GO" id="GO:0042286">
    <property type="term" value="F:glutamate-1-semialdehyde 2,1-aminomutase activity"/>
    <property type="evidence" value="ECO:0007669"/>
    <property type="project" value="UniProtKB-EC"/>
</dbReference>
<dbReference type="GO" id="GO:0042803">
    <property type="term" value="F:protein homodimerization activity"/>
    <property type="evidence" value="ECO:0000314"/>
    <property type="project" value="UniProtKB"/>
</dbReference>
<dbReference type="GO" id="GO:0030170">
    <property type="term" value="F:pyridoxal phosphate binding"/>
    <property type="evidence" value="ECO:0000314"/>
    <property type="project" value="UniProtKB"/>
</dbReference>
<dbReference type="GO" id="GO:0008483">
    <property type="term" value="F:transaminase activity"/>
    <property type="evidence" value="ECO:0007669"/>
    <property type="project" value="InterPro"/>
</dbReference>
<dbReference type="GO" id="GO:0015995">
    <property type="term" value="P:chlorophyll biosynthetic process"/>
    <property type="evidence" value="ECO:0007669"/>
    <property type="project" value="UniProtKB-UniPathway"/>
</dbReference>
<dbReference type="GO" id="GO:0006782">
    <property type="term" value="P:protoporphyrinogen IX biosynthetic process"/>
    <property type="evidence" value="ECO:0007669"/>
    <property type="project" value="UniProtKB-UniPathway"/>
</dbReference>
<dbReference type="CDD" id="cd00610">
    <property type="entry name" value="OAT_like"/>
    <property type="match status" value="1"/>
</dbReference>
<dbReference type="FunFam" id="3.40.640.10:FF:000021">
    <property type="entry name" value="Glutamate-1-semialdehyde 2,1-aminomutase"/>
    <property type="match status" value="1"/>
</dbReference>
<dbReference type="FunFam" id="3.90.1150.10:FF:000012">
    <property type="entry name" value="Glutamate-1-semialdehyde 2,1-aminomutase"/>
    <property type="match status" value="1"/>
</dbReference>
<dbReference type="Gene3D" id="3.90.1150.10">
    <property type="entry name" value="Aspartate Aminotransferase, domain 1"/>
    <property type="match status" value="1"/>
</dbReference>
<dbReference type="Gene3D" id="3.40.640.10">
    <property type="entry name" value="Type I PLP-dependent aspartate aminotransferase-like (Major domain)"/>
    <property type="match status" value="1"/>
</dbReference>
<dbReference type="HAMAP" id="MF_00375">
    <property type="entry name" value="HemL_aminotrans_3"/>
    <property type="match status" value="1"/>
</dbReference>
<dbReference type="InterPro" id="IPR004639">
    <property type="entry name" value="4pyrrol_synth_GluAld_NH2Trfase"/>
</dbReference>
<dbReference type="InterPro" id="IPR005814">
    <property type="entry name" value="Aminotrans_3"/>
</dbReference>
<dbReference type="InterPro" id="IPR049704">
    <property type="entry name" value="Aminotrans_3_PPA_site"/>
</dbReference>
<dbReference type="InterPro" id="IPR015424">
    <property type="entry name" value="PyrdxlP-dep_Trfase"/>
</dbReference>
<dbReference type="InterPro" id="IPR015421">
    <property type="entry name" value="PyrdxlP-dep_Trfase_major"/>
</dbReference>
<dbReference type="InterPro" id="IPR015422">
    <property type="entry name" value="PyrdxlP-dep_Trfase_small"/>
</dbReference>
<dbReference type="NCBIfam" id="TIGR00713">
    <property type="entry name" value="hemL"/>
    <property type="match status" value="1"/>
</dbReference>
<dbReference type="NCBIfam" id="NF000818">
    <property type="entry name" value="PRK00062.1"/>
    <property type="match status" value="1"/>
</dbReference>
<dbReference type="PANTHER" id="PTHR43713">
    <property type="entry name" value="GLUTAMATE-1-SEMIALDEHYDE 2,1-AMINOMUTASE"/>
    <property type="match status" value="1"/>
</dbReference>
<dbReference type="PANTHER" id="PTHR43713:SF3">
    <property type="entry name" value="GLUTAMATE-1-SEMIALDEHYDE 2,1-AMINOMUTASE 1, CHLOROPLASTIC-RELATED"/>
    <property type="match status" value="1"/>
</dbReference>
<dbReference type="Pfam" id="PF00202">
    <property type="entry name" value="Aminotran_3"/>
    <property type="match status" value="1"/>
</dbReference>
<dbReference type="SUPFAM" id="SSF53383">
    <property type="entry name" value="PLP-dependent transferases"/>
    <property type="match status" value="1"/>
</dbReference>
<dbReference type="PROSITE" id="PS00600">
    <property type="entry name" value="AA_TRANSFER_CLASS_3"/>
    <property type="match status" value="1"/>
</dbReference>
<accession>P42799</accession>
<reference key="1">
    <citation type="journal article" date="1994" name="Plant Cell">
        <title>Light regulation of chlorophyll biosynthesis at the level of 5-aminolevulinate formation in Arabidopsis.</title>
        <authorList>
            <person name="Ilag L.L."/>
            <person name="Kumar A.M."/>
            <person name="Soell D."/>
        </authorList>
    </citation>
    <scope>NUCLEOTIDE SEQUENCE [GENOMIC DNA]</scope>
    <scope>FUNCTION</scope>
    <scope>INDUCTION BY LIGHT</scope>
    <scope>TISSUE SPECIFICITY</scope>
    <scope>CATALYTIC ACTIVITY</scope>
    <scope>PATHWAY</scope>
    <source>
        <strain>cv. Columbia</strain>
        <tissue>Leaf</tissue>
    </source>
</reference>
<reference key="2">
    <citation type="journal article" date="1997" name="DNA Res.">
        <title>Structural analysis of Arabidopsis thaliana chromosome 5. I. Sequence features of the 1.6 Mb regions covered by twenty physically assigned P1 clones.</title>
        <authorList>
            <person name="Sato S."/>
            <person name="Kotani H."/>
            <person name="Nakamura Y."/>
            <person name="Kaneko T."/>
            <person name="Asamizu E."/>
            <person name="Fukami M."/>
            <person name="Miyajima N."/>
            <person name="Tabata S."/>
        </authorList>
    </citation>
    <scope>NUCLEOTIDE SEQUENCE [LARGE SCALE GENOMIC DNA]</scope>
    <source>
        <strain>cv. Columbia</strain>
    </source>
</reference>
<reference key="3">
    <citation type="journal article" date="2017" name="Plant J.">
        <title>Araport11: a complete reannotation of the Arabidopsis thaliana reference genome.</title>
        <authorList>
            <person name="Cheng C.Y."/>
            <person name="Krishnakumar V."/>
            <person name="Chan A.P."/>
            <person name="Thibaud-Nissen F."/>
            <person name="Schobel S."/>
            <person name="Town C.D."/>
        </authorList>
    </citation>
    <scope>GENOME REANNOTATION</scope>
    <source>
        <strain>cv. Columbia</strain>
    </source>
</reference>
<reference key="4">
    <citation type="journal article" date="2003" name="Science">
        <title>Empirical analysis of transcriptional activity in the Arabidopsis genome.</title>
        <authorList>
            <person name="Yamada K."/>
            <person name="Lim J."/>
            <person name="Dale J.M."/>
            <person name="Chen H."/>
            <person name="Shinn P."/>
            <person name="Palm C.J."/>
            <person name="Southwick A.M."/>
            <person name="Wu H.C."/>
            <person name="Kim C.J."/>
            <person name="Nguyen M."/>
            <person name="Pham P.K."/>
            <person name="Cheuk R.F."/>
            <person name="Karlin-Newmann G."/>
            <person name="Liu S.X."/>
            <person name="Lam B."/>
            <person name="Sakano H."/>
            <person name="Wu T."/>
            <person name="Yu G."/>
            <person name="Miranda M."/>
            <person name="Quach H.L."/>
            <person name="Tripp M."/>
            <person name="Chang C.H."/>
            <person name="Lee J.M."/>
            <person name="Toriumi M.J."/>
            <person name="Chan M.M."/>
            <person name="Tang C.C."/>
            <person name="Onodera C.S."/>
            <person name="Deng J.M."/>
            <person name="Akiyama K."/>
            <person name="Ansari Y."/>
            <person name="Arakawa T."/>
            <person name="Banh J."/>
            <person name="Banno F."/>
            <person name="Bowser L."/>
            <person name="Brooks S.Y."/>
            <person name="Carninci P."/>
            <person name="Chao Q."/>
            <person name="Choy N."/>
            <person name="Enju A."/>
            <person name="Goldsmith A.D."/>
            <person name="Gurjal M."/>
            <person name="Hansen N.F."/>
            <person name="Hayashizaki Y."/>
            <person name="Johnson-Hopson C."/>
            <person name="Hsuan V.W."/>
            <person name="Iida K."/>
            <person name="Karnes M."/>
            <person name="Khan S."/>
            <person name="Koesema E."/>
            <person name="Ishida J."/>
            <person name="Jiang P.X."/>
            <person name="Jones T."/>
            <person name="Kawai J."/>
            <person name="Kamiya A."/>
            <person name="Meyers C."/>
            <person name="Nakajima M."/>
            <person name="Narusaka M."/>
            <person name="Seki M."/>
            <person name="Sakurai T."/>
            <person name="Satou M."/>
            <person name="Tamse R."/>
            <person name="Vaysberg M."/>
            <person name="Wallender E.K."/>
            <person name="Wong C."/>
            <person name="Yamamura Y."/>
            <person name="Yuan S."/>
            <person name="Shinozaki K."/>
            <person name="Davis R.W."/>
            <person name="Theologis A."/>
            <person name="Ecker J.R."/>
        </authorList>
    </citation>
    <scope>NUCLEOTIDE SEQUENCE [LARGE SCALE MRNA]</scope>
    <source>
        <strain>cv. Columbia</strain>
    </source>
</reference>
<reference key="5">
    <citation type="journal article" date="2005" name="Trends Plant Sci.">
        <title>Green genes gleaned.</title>
        <authorList>
            <person name="Beale S.I."/>
        </authorList>
    </citation>
    <scope>REVIEW</scope>
</reference>
<reference key="6">
    <citation type="journal article" date="2015" name="Plant Cell Physiol.">
        <title>Mutations in plastidial 5-aminolevulinic acid biosynthesis genes suppress a pleiotropic defect in shoot development of a mitochondrial GABA shunt mutant in Arabidopsis.</title>
        <authorList>
            <person name="Toyokura K."/>
            <person name="Yamaguchi K."/>
            <person name="Shigenobu S."/>
            <person name="Fukaki H."/>
            <person name="Tatematsu K."/>
            <person name="Okada K."/>
        </authorList>
    </citation>
    <scope>DISRUPTION PHENOTYPE</scope>
    <source>
        <strain>cv. Columbia</strain>
    </source>
</reference>
<reference key="7">
    <citation type="journal article" date="2016" name="Acta Crystallogr. F">
        <title>Crystal structure of glutamate-1-semialdehyde-2,1-aminomutase from Arabidopsis thaliana.</title>
        <authorList>
            <person name="Song Y."/>
            <person name="Pu H."/>
            <person name="Jiang T."/>
            <person name="Zhang L."/>
            <person name="Ouyang M."/>
        </authorList>
    </citation>
    <scope>X-RAY CRYSTALLOGRAPHY (1.25 ANGSTROMS) OF 41-474</scope>
    <scope>N6-(PYRIDOXAL PHOSPHATE)LYSINE</scope>
    <scope>SUBUNIT</scope>
    <scope>COFACTOR</scope>
    <scope>BIOPHYSICOCHEMICAL PROPERTIES</scope>
</reference>
<feature type="transit peptide" description="Chloroplast" evidence="2">
    <location>
        <begin position="1"/>
        <end position="38"/>
    </location>
</feature>
<feature type="chain" id="PRO_0000001255" description="Glutamate-1-semialdehyde 2,1-aminomutase 1, chloroplastic">
    <location>
        <begin position="39"/>
        <end position="474"/>
    </location>
</feature>
<feature type="modified residue" description="N6-(pyridoxal phosphate)lysine" evidence="4 12">
    <location>
        <position position="314"/>
    </location>
</feature>
<feature type="helix" evidence="13">
    <location>
        <begin position="51"/>
        <end position="60"/>
    </location>
</feature>
<feature type="turn" evidence="13">
    <location>
        <begin position="61"/>
        <end position="63"/>
    </location>
</feature>
<feature type="helix" evidence="13">
    <location>
        <begin position="65"/>
        <end position="67"/>
    </location>
</feature>
<feature type="strand" evidence="13">
    <location>
        <begin position="68"/>
        <end position="70"/>
    </location>
</feature>
<feature type="helix" evidence="13">
    <location>
        <begin position="71"/>
        <end position="74"/>
    </location>
</feature>
<feature type="helix" evidence="13">
    <location>
        <begin position="76"/>
        <end position="78"/>
    </location>
</feature>
<feature type="strand" evidence="13">
    <location>
        <begin position="85"/>
        <end position="90"/>
    </location>
</feature>
<feature type="strand" evidence="13">
    <location>
        <begin position="92"/>
        <end position="95"/>
    </location>
</feature>
<feature type="strand" evidence="13">
    <location>
        <begin position="100"/>
        <end position="105"/>
    </location>
</feature>
<feature type="helix" evidence="13">
    <location>
        <begin position="106"/>
        <end position="108"/>
    </location>
</feature>
<feature type="turn" evidence="13">
    <location>
        <begin position="109"/>
        <end position="113"/>
    </location>
</feature>
<feature type="helix" evidence="13">
    <location>
        <begin position="118"/>
        <end position="128"/>
    </location>
</feature>
<feature type="helix" evidence="13">
    <location>
        <begin position="139"/>
        <end position="151"/>
    </location>
</feature>
<feature type="strand" evidence="13">
    <location>
        <begin position="156"/>
        <end position="163"/>
    </location>
</feature>
<feature type="helix" evidence="13">
    <location>
        <begin position="164"/>
        <end position="179"/>
    </location>
</feature>
<feature type="strand" evidence="13">
    <location>
        <begin position="183"/>
        <end position="188"/>
    </location>
</feature>
<feature type="helix" evidence="13">
    <location>
        <begin position="196"/>
        <end position="198"/>
    </location>
</feature>
<feature type="strand" evidence="13">
    <location>
        <begin position="205"/>
        <end position="208"/>
    </location>
</feature>
<feature type="strand" evidence="13">
    <location>
        <begin position="212"/>
        <end position="214"/>
    </location>
</feature>
<feature type="helix" evidence="13">
    <location>
        <begin position="219"/>
        <end position="222"/>
    </location>
</feature>
<feature type="strand" evidence="13">
    <location>
        <begin position="225"/>
        <end position="229"/>
    </location>
</feature>
<feature type="helix" evidence="13">
    <location>
        <begin position="233"/>
        <end position="242"/>
    </location>
</feature>
<feature type="turn" evidence="13">
    <location>
        <begin position="244"/>
        <end position="246"/>
    </location>
</feature>
<feature type="strand" evidence="13">
    <location>
        <begin position="247"/>
        <end position="252"/>
    </location>
</feature>
<feature type="strand" evidence="13">
    <location>
        <begin position="254"/>
        <end position="256"/>
    </location>
</feature>
<feature type="helix" evidence="13">
    <location>
        <begin position="266"/>
        <end position="278"/>
    </location>
</feature>
<feature type="strand" evidence="13">
    <location>
        <begin position="282"/>
        <end position="286"/>
    </location>
</feature>
<feature type="turn" evidence="13">
    <location>
        <begin position="288"/>
        <end position="293"/>
    </location>
</feature>
<feature type="helix" evidence="13">
    <location>
        <begin position="298"/>
        <end position="303"/>
    </location>
</feature>
<feature type="strand" evidence="13">
    <location>
        <begin position="308"/>
        <end position="313"/>
    </location>
</feature>
<feature type="helix" evidence="13">
    <location>
        <begin position="314"/>
        <end position="317"/>
    </location>
</feature>
<feature type="strand" evidence="13">
    <location>
        <begin position="323"/>
        <end position="327"/>
    </location>
</feature>
<feature type="helix" evidence="13">
    <location>
        <begin position="329"/>
        <end position="332"/>
    </location>
</feature>
<feature type="turn" evidence="13">
    <location>
        <begin position="336"/>
        <end position="338"/>
    </location>
</feature>
<feature type="strand" evidence="13">
    <location>
        <begin position="339"/>
        <end position="341"/>
    </location>
</feature>
<feature type="helix" evidence="13">
    <location>
        <begin position="351"/>
        <end position="364"/>
    </location>
</feature>
<feature type="helix" evidence="13">
    <location>
        <begin position="369"/>
        <end position="390"/>
    </location>
</feature>
<feature type="strand" evidence="13">
    <location>
        <begin position="396"/>
        <end position="400"/>
    </location>
</feature>
<feature type="strand" evidence="13">
    <location>
        <begin position="403"/>
        <end position="411"/>
    </location>
</feature>
<feature type="helix" evidence="13">
    <location>
        <begin position="416"/>
        <end position="419"/>
    </location>
</feature>
<feature type="helix" evidence="13">
    <location>
        <begin position="424"/>
        <end position="436"/>
    </location>
</feature>
<feature type="helix" evidence="13">
    <location>
        <begin position="457"/>
        <end position="471"/>
    </location>
</feature>
<gene>
    <name evidence="8" type="primary">GSA1</name>
    <name evidence="6" type="synonym">HEML1</name>
    <name evidence="10" type="ordered locus">At5g63570</name>
    <name evidence="11" type="ORF">MBK5.3</name>
</gene>
<organism>
    <name type="scientific">Arabidopsis thaliana</name>
    <name type="common">Mouse-ear cress</name>
    <dbReference type="NCBI Taxonomy" id="3702"/>
    <lineage>
        <taxon>Eukaryota</taxon>
        <taxon>Viridiplantae</taxon>
        <taxon>Streptophyta</taxon>
        <taxon>Embryophyta</taxon>
        <taxon>Tracheophyta</taxon>
        <taxon>Spermatophyta</taxon>
        <taxon>Magnoliopsida</taxon>
        <taxon>eudicotyledons</taxon>
        <taxon>Gunneridae</taxon>
        <taxon>Pentapetalae</taxon>
        <taxon>rosids</taxon>
        <taxon>malvids</taxon>
        <taxon>Brassicales</taxon>
        <taxon>Brassicaceae</taxon>
        <taxon>Camelineae</taxon>
        <taxon>Arabidopsis</taxon>
    </lineage>
</organism>
<sequence length="474" mass="50370">MSATLTGSGTALGFSCSSKISKRVSSSPASNRCCIKMSVSVDEKKKSFSLQKSEEAFNAAKNLMPGGVNSPVRAFKSVGGQPVLIDSVKGSKMWDIDGNEYIDYVGSWGPAIIGHADDEVLAALAETMKKGTSFGAPCLLENVLAEMVISAVPSIEMVRFVNSGTEACMGVLRLARAFTNKEKFIKFEGCYHGHANAFLVKAGSGVATLGLPDSPGVPKAATSDTLTAPYNDLEAVEKLFAAHKGEISAVILEPVVGNSGFIPPTPEFINGLRQLTKDNGVLLIFDEVMTGFRLAYGGAQEYFGITPDLTTLGKIIGGGLPVGAYGGRRDIMEMVAPAGPMYQAGTLSGNPLAMTAGIHTLKRLKQAGTYEYLDKITKELTNGILEAGKKTGHPMCGGYISGMFGFFFAEGPVYNFADSKKSDTEKFGRFFRGMLEEGVYFAPSQFEAGFTSLAHTPEDIQLTIAAAERVLSRI</sequence>
<keyword id="KW-0002">3D-structure</keyword>
<keyword id="KW-0149">Chlorophyll biosynthesis</keyword>
<keyword id="KW-0150">Chloroplast</keyword>
<keyword id="KW-0413">Isomerase</keyword>
<keyword id="KW-0934">Plastid</keyword>
<keyword id="KW-0627">Porphyrin biosynthesis</keyword>
<keyword id="KW-0663">Pyridoxal phosphate</keyword>
<keyword id="KW-1185">Reference proteome</keyword>
<keyword id="KW-0809">Transit peptide</keyword>